<comment type="cofactor">
    <cofactor evidence="1">
        <name>Zn(2+)</name>
        <dbReference type="ChEBI" id="CHEBI:29105"/>
    </cofactor>
    <text evidence="1">Binds 1 zinc ion per subunit.</text>
</comment>
<comment type="similarity">
    <text evidence="1">Belongs to the eukaryotic ribosomal protein eL43 family.</text>
</comment>
<gene>
    <name evidence="1" type="primary">rpl37ae</name>
    <name type="ordered locus">OE_1373R</name>
</gene>
<feature type="chain" id="PRO_1000116100" description="Large ribosomal subunit protein eL43">
    <location>
        <begin position="1"/>
        <end position="95"/>
    </location>
</feature>
<feature type="zinc finger region" description="C4-type" evidence="1">
    <location>
        <begin position="38"/>
        <end position="59"/>
    </location>
</feature>
<protein>
    <recommendedName>
        <fullName evidence="1">Large ribosomal subunit protein eL43</fullName>
    </recommendedName>
    <alternativeName>
        <fullName evidence="2">50S ribosomal protein L37Ae</fullName>
    </alternativeName>
    <alternativeName>
        <fullName evidence="1">Ribosomal protein L43e</fullName>
    </alternativeName>
</protein>
<evidence type="ECO:0000255" key="1">
    <source>
        <dbReference type="HAMAP-Rule" id="MF_00327"/>
    </source>
</evidence>
<evidence type="ECO:0000305" key="2"/>
<keyword id="KW-0479">Metal-binding</keyword>
<keyword id="KW-0687">Ribonucleoprotein</keyword>
<keyword id="KW-0689">Ribosomal protein</keyword>
<keyword id="KW-0694">RNA-binding</keyword>
<keyword id="KW-0862">Zinc</keyword>
<keyword id="KW-0863">Zinc-finger</keyword>
<dbReference type="EMBL" id="AM774415">
    <property type="protein sequence ID" value="CAP13091.1"/>
    <property type="molecule type" value="Genomic_DNA"/>
</dbReference>
<dbReference type="RefSeq" id="WP_012289127.1">
    <property type="nucleotide sequence ID" value="NC_010364.1"/>
</dbReference>
<dbReference type="SMR" id="B0R2Y1"/>
<dbReference type="EnsemblBacteria" id="CAP13091">
    <property type="protein sequence ID" value="CAP13091"/>
    <property type="gene ID" value="OE_1373R"/>
</dbReference>
<dbReference type="KEGG" id="hsl:OE_1373R"/>
<dbReference type="HOGENOM" id="CLU_141199_2_0_2"/>
<dbReference type="PhylomeDB" id="B0R2Y1"/>
<dbReference type="Proteomes" id="UP000001321">
    <property type="component" value="Chromosome"/>
</dbReference>
<dbReference type="GO" id="GO:1990904">
    <property type="term" value="C:ribonucleoprotein complex"/>
    <property type="evidence" value="ECO:0007669"/>
    <property type="project" value="UniProtKB-KW"/>
</dbReference>
<dbReference type="GO" id="GO:0005840">
    <property type="term" value="C:ribosome"/>
    <property type="evidence" value="ECO:0007669"/>
    <property type="project" value="UniProtKB-KW"/>
</dbReference>
<dbReference type="GO" id="GO:0070180">
    <property type="term" value="F:large ribosomal subunit rRNA binding"/>
    <property type="evidence" value="ECO:0007669"/>
    <property type="project" value="UniProtKB-UniRule"/>
</dbReference>
<dbReference type="GO" id="GO:0003735">
    <property type="term" value="F:structural constituent of ribosome"/>
    <property type="evidence" value="ECO:0007669"/>
    <property type="project" value="InterPro"/>
</dbReference>
<dbReference type="GO" id="GO:0008270">
    <property type="term" value="F:zinc ion binding"/>
    <property type="evidence" value="ECO:0007669"/>
    <property type="project" value="UniProtKB-UniRule"/>
</dbReference>
<dbReference type="GO" id="GO:0006412">
    <property type="term" value="P:translation"/>
    <property type="evidence" value="ECO:0007669"/>
    <property type="project" value="UniProtKB-UniRule"/>
</dbReference>
<dbReference type="Gene3D" id="2.20.25.30">
    <property type="match status" value="1"/>
</dbReference>
<dbReference type="HAMAP" id="MF_00327">
    <property type="entry name" value="Ribosomal_eL43"/>
    <property type="match status" value="1"/>
</dbReference>
<dbReference type="InterPro" id="IPR011331">
    <property type="entry name" value="Ribosomal_eL37/eL43"/>
</dbReference>
<dbReference type="InterPro" id="IPR002674">
    <property type="entry name" value="Ribosomal_eL43"/>
</dbReference>
<dbReference type="InterPro" id="IPR050522">
    <property type="entry name" value="Ribosomal_protein_eL43"/>
</dbReference>
<dbReference type="InterPro" id="IPR011332">
    <property type="entry name" value="Ribosomal_zn-bd"/>
</dbReference>
<dbReference type="NCBIfam" id="TIGR00280">
    <property type="entry name" value="eL43_euk_arch"/>
    <property type="match status" value="1"/>
</dbReference>
<dbReference type="NCBIfam" id="NF003058">
    <property type="entry name" value="PRK03976.1"/>
    <property type="match status" value="1"/>
</dbReference>
<dbReference type="PANTHER" id="PTHR48129">
    <property type="entry name" value="60S RIBOSOMAL PROTEIN L37A"/>
    <property type="match status" value="1"/>
</dbReference>
<dbReference type="PANTHER" id="PTHR48129:SF1">
    <property type="entry name" value="LARGE RIBOSOMAL SUBUNIT PROTEIN EL43"/>
    <property type="match status" value="1"/>
</dbReference>
<dbReference type="Pfam" id="PF01780">
    <property type="entry name" value="Ribosomal_L37ae"/>
    <property type="match status" value="1"/>
</dbReference>
<dbReference type="SUPFAM" id="SSF57829">
    <property type="entry name" value="Zn-binding ribosomal proteins"/>
    <property type="match status" value="1"/>
</dbReference>
<organism>
    <name type="scientific">Halobacterium salinarum (strain ATCC 29341 / DSM 671 / R1)</name>
    <dbReference type="NCBI Taxonomy" id="478009"/>
    <lineage>
        <taxon>Archaea</taxon>
        <taxon>Methanobacteriati</taxon>
        <taxon>Methanobacteriota</taxon>
        <taxon>Stenosarchaea group</taxon>
        <taxon>Halobacteria</taxon>
        <taxon>Halobacteriales</taxon>
        <taxon>Halobacteriaceae</taxon>
        <taxon>Halobacterium</taxon>
        <taxon>Halobacterium salinarum NRC-34001</taxon>
    </lineage>
</organism>
<accession>B0R2Y1</accession>
<proteinExistence type="inferred from homology"/>
<reference key="1">
    <citation type="journal article" date="2008" name="Genomics">
        <title>Evolution in the laboratory: the genome of Halobacterium salinarum strain R1 compared to that of strain NRC-1.</title>
        <authorList>
            <person name="Pfeiffer F."/>
            <person name="Schuster S.C."/>
            <person name="Broicher A."/>
            <person name="Falb M."/>
            <person name="Palm P."/>
            <person name="Rodewald K."/>
            <person name="Ruepp A."/>
            <person name="Soppa J."/>
            <person name="Tittor J."/>
            <person name="Oesterhelt D."/>
        </authorList>
    </citation>
    <scope>NUCLEOTIDE SEQUENCE [LARGE SCALE GENOMIC DNA]</scope>
    <source>
        <strain>ATCC 29341 / DSM 671 / R1</strain>
    </source>
</reference>
<name>RL37A_HALS3</name>
<sequence length="95" mass="10028">MANQSSTGSAGRFGARYGRVSRRRVSDIEGTMNEDHACPDCGSEAVSREGTGIWQCGKCGYKYAGGAYQPQTPSGKTVTRSIRTALGETGDSNSE</sequence>